<comment type="function">
    <text evidence="1 2">Acts as a transcriptional repressor (By similarity). Capable of transcription autoinactivation (By similarity). Binds to the consensus sequence 5'-C/GTAAT-3' in downstream activin regulatory elements (DARE) in the gene promoter, thereby repressing the transcription of CGA/alpha-GSU and GNRHR (By similarity). Represses transcription of myoblast differentiation factors (By similarity). Binds to core enhancer regions in target gene promoters of myoblast differentiation factors with binding specificity facilitated by interaction with PIAS1 (By similarity). Regulates, in a stage-specific manner, a developmental program of gene expression in the fetal tooth bud that controls odontoblast differentiation and proliferation of dental mesenchymal cells (By similarity). At the bud stage, required for mesenchymal molar tooth bud development via facilitating reciprocal signaling between dental epithelial and mesenchymal cells (By similarity). May also regulate expression of Wnt antagonists such as DKK2 and SFPR2 in the developing tooth mesenchyme (By similarity). Required for BMP4 expression in dental mesenchyme cells (By similarity). Also, in response to BMP4, required for BMP4 expression in neighboring dental epithelial cells (By similarity). Required for maximal FGF4-induced expression of SDC1 in dental mesenchyme cells (By similarity). Also in response to SDC1, required for SDC1 expression in neighboring dental epithelial cells (By similarity). At the early bell stage, acts to drive proliferation of dental mesenchyme cells, however during the late bell stage acts as an homeostatic regulator of the cell cycle (By similarity). Regulates proliferation and inhibits premature mesenchymal odontogenesis during the bell stage via inhibition of the Wnt signaling component CTNNB1 and subsequent repression of the odontoblast differentiation factors BMP2, BMP4, LEF1, ALPL and BGLAP/OCN (By similarity). Additionally, required for correct development and fusion of the palatal shelves and embryonic mandibular formation (By similarity). Plays a role in embryonic bone formation of the middle ear, skull and nasal bones (By similarity). Required for correct formation and thickness of the nail plate (By similarity). May play a role in limb-pattern formation (By similarity).</text>
</comment>
<comment type="subunit">
    <text evidence="1">Interacts with CREBBP/CBP, TBP and SP1; interaction with these transcription activators may inhibit autoinactivation (By similarity). Interacts (via C-terminus) with PIAS1 (via N-terminus); the interaction is required for the localization of both proteins to the nuclear periphery and specific binding of MSX1 to the core enhancer region in target gene promoters (By similarity). Interacts with H1-5 (By similarity).</text>
</comment>
<comment type="subcellular location">
    <subcellularLocation>
        <location evidence="1">Nucleus</location>
    </subcellularLocation>
    <text evidence="1">Interaction with PIAS1 is required for localization to the nuclear periphery (By similarity).</text>
</comment>
<comment type="PTM">
    <text evidence="1">Sumoylated by PIAS1, desumoylated by SENP1 (By similarity). Sumoylation of Lys-9 and Lys-127 not required for interaction with H1-5, transcriptional repression, inhibition of myoblast differentiation, or binding to gene promoters (By similarity).</text>
</comment>
<comment type="similarity">
    <text evidence="5">Belongs to the Msh homeobox family.</text>
</comment>
<organism>
    <name type="scientific">Lepilemur edwardsi</name>
    <name type="common">Milne-Edwards's sportive lemur</name>
    <dbReference type="NCBI Taxonomy" id="122230"/>
    <lineage>
        <taxon>Eukaryota</taxon>
        <taxon>Metazoa</taxon>
        <taxon>Chordata</taxon>
        <taxon>Craniata</taxon>
        <taxon>Vertebrata</taxon>
        <taxon>Euteleostomi</taxon>
        <taxon>Mammalia</taxon>
        <taxon>Eutheria</taxon>
        <taxon>Euarchontoglires</taxon>
        <taxon>Primates</taxon>
        <taxon>Strepsirrhini</taxon>
        <taxon>Lemuriformes</taxon>
        <taxon>Lepilemuridae</taxon>
        <taxon>Lepilemur</taxon>
    </lineage>
</organism>
<feature type="chain" id="PRO_0000049089" description="Homeobox protein MSX-1">
    <location>
        <begin position="1" status="less than"/>
        <end position="297"/>
    </location>
</feature>
<feature type="DNA-binding region" description="Homeobox" evidence="3">
    <location>
        <begin position="166"/>
        <end position="225"/>
    </location>
</feature>
<feature type="region of interest" description="Disordered" evidence="4">
    <location>
        <begin position="1"/>
        <end position="51"/>
    </location>
</feature>
<feature type="region of interest" description="Disordered" evidence="4">
    <location>
        <begin position="63"/>
        <end position="109"/>
    </location>
</feature>
<feature type="region of interest" description="Disordered" evidence="4">
    <location>
        <begin position="129"/>
        <end position="169"/>
    </location>
</feature>
<feature type="compositionally biased region" description="Low complexity" evidence="4">
    <location>
        <begin position="24"/>
        <end position="38"/>
    </location>
</feature>
<feature type="compositionally biased region" description="Low complexity" evidence="4">
    <location>
        <begin position="71"/>
        <end position="91"/>
    </location>
</feature>
<feature type="compositionally biased region" description="Basic residues" evidence="4">
    <location>
        <begin position="160"/>
        <end position="169"/>
    </location>
</feature>
<feature type="cross-link" description="Glycyl lysine isopeptide (Lys-Gly) (interchain with G-Cter in SUMO)" evidence="1">
    <location>
        <position position="9"/>
    </location>
</feature>
<feature type="cross-link" description="Glycyl lysine isopeptide (Lys-Gly) (interchain with G-Cter in SUMO)" evidence="1">
    <location>
        <position position="127"/>
    </location>
</feature>
<feature type="non-terminal residue">
    <location>
        <position position="1"/>
    </location>
</feature>
<reference key="1">
    <citation type="journal article" date="2006" name="Mol. Biol. Evol.">
        <title>Molecular evolution of the primate developmental genes MSX1 and PAX9.</title>
        <authorList>
            <person name="Perry G.H."/>
            <person name="Verrelli B.C."/>
            <person name="Stone A.C."/>
        </authorList>
    </citation>
    <scope>NUCLEOTIDE SEQUENCE [GENOMIC DNA]</scope>
    <source>
        <strain>Isolate JP207</strain>
    </source>
</reference>
<evidence type="ECO:0000250" key="1">
    <source>
        <dbReference type="UniProtKB" id="P13297"/>
    </source>
</evidence>
<evidence type="ECO:0000250" key="2">
    <source>
        <dbReference type="UniProtKB" id="P28360"/>
    </source>
</evidence>
<evidence type="ECO:0000255" key="3">
    <source>
        <dbReference type="PROSITE-ProRule" id="PRU00108"/>
    </source>
</evidence>
<evidence type="ECO:0000256" key="4">
    <source>
        <dbReference type="SAM" id="MobiDB-lite"/>
    </source>
</evidence>
<evidence type="ECO:0000305" key="5"/>
<proteinExistence type="inferred from homology"/>
<gene>
    <name evidence="1" type="primary">MSX1</name>
</gene>
<accession>Q2VL77</accession>
<protein>
    <recommendedName>
        <fullName evidence="5">Homeobox protein MSX-1</fullName>
    </recommendedName>
    <alternativeName>
        <fullName>Msh homeobox 1-like protein</fullName>
    </alternativeName>
</protein>
<name>MSX1_LEPED</name>
<keyword id="KW-0217">Developmental protein</keyword>
<keyword id="KW-0238">DNA-binding</keyword>
<keyword id="KW-0371">Homeobox</keyword>
<keyword id="KW-1017">Isopeptide bond</keyword>
<keyword id="KW-0539">Nucleus</keyword>
<keyword id="KW-0678">Repressor</keyword>
<keyword id="KW-0804">Transcription</keyword>
<keyword id="KW-0805">Transcription regulation</keyword>
<keyword id="KW-0832">Ubl conjugation</keyword>
<sequence length="297" mass="31019">MTSLPLGVKVEDSAFGKPAGGGASQAPSAAAATAATMGADEEGAKPKVPPSLLPFSVEALMADHRKPGAKESALAASEGAQAAGGSAQSLGVRPGSLGAPDAPSSPRPLGHFSVGGLLKLPEDALIKAESPEKPERTPWMQSPRFSPPPARRLSPPACTLRKHKTNRKPRTPFTTAQLLALERKFRQKQYLSIAERAEFSSSLSLTETQVKIWFQNRRAKAKRLQEAELEKLKMAAKPMLPPAAFGLSFPLGGPAAVAAAAGASLYGASGPFQRAALPVAPVGLYTAHVGYSMYHLT</sequence>
<dbReference type="EMBL" id="DQ067489">
    <property type="protein sequence ID" value="AAZ30474.1"/>
    <property type="molecule type" value="Genomic_DNA"/>
</dbReference>
<dbReference type="EMBL" id="DQ067488">
    <property type="protein sequence ID" value="AAZ30474.1"/>
    <property type="status" value="JOINED"/>
    <property type="molecule type" value="Genomic_DNA"/>
</dbReference>
<dbReference type="SMR" id="Q2VL77"/>
<dbReference type="GO" id="GO:0034399">
    <property type="term" value="C:nuclear periphery"/>
    <property type="evidence" value="ECO:0000250"/>
    <property type="project" value="UniProtKB"/>
</dbReference>
<dbReference type="GO" id="GO:0000981">
    <property type="term" value="F:DNA-binding transcription factor activity, RNA polymerase II-specific"/>
    <property type="evidence" value="ECO:0007669"/>
    <property type="project" value="InterPro"/>
</dbReference>
<dbReference type="GO" id="GO:0000977">
    <property type="term" value="F:RNA polymerase II transcription regulatory region sequence-specific DNA binding"/>
    <property type="evidence" value="ECO:0007669"/>
    <property type="project" value="TreeGrafter"/>
</dbReference>
<dbReference type="GO" id="GO:0000976">
    <property type="term" value="F:transcription cis-regulatory region binding"/>
    <property type="evidence" value="ECO:0000250"/>
    <property type="project" value="UniProtKB"/>
</dbReference>
<dbReference type="GO" id="GO:0048598">
    <property type="term" value="P:embryonic morphogenesis"/>
    <property type="evidence" value="ECO:0007669"/>
    <property type="project" value="TreeGrafter"/>
</dbReference>
<dbReference type="GO" id="GO:0048839">
    <property type="term" value="P:inner ear development"/>
    <property type="evidence" value="ECO:0000250"/>
    <property type="project" value="UniProtKB"/>
</dbReference>
<dbReference type="GO" id="GO:0010629">
    <property type="term" value="P:negative regulation of gene expression"/>
    <property type="evidence" value="ECO:0000250"/>
    <property type="project" value="UniProtKB"/>
</dbReference>
<dbReference type="GO" id="GO:1901330">
    <property type="term" value="P:negative regulation of odontoblast differentiation"/>
    <property type="evidence" value="ECO:0000250"/>
    <property type="project" value="UniProtKB"/>
</dbReference>
<dbReference type="GO" id="GO:0043584">
    <property type="term" value="P:nose development"/>
    <property type="evidence" value="ECO:0000250"/>
    <property type="project" value="UniProtKB"/>
</dbReference>
<dbReference type="GO" id="GO:0045787">
    <property type="term" value="P:positive regulation of cell cycle"/>
    <property type="evidence" value="ECO:0000250"/>
    <property type="project" value="UniProtKB"/>
</dbReference>
<dbReference type="GO" id="GO:0042482">
    <property type="term" value="P:positive regulation of odontogenesis"/>
    <property type="evidence" value="ECO:0000250"/>
    <property type="project" value="UniProtKB"/>
</dbReference>
<dbReference type="GO" id="GO:0042481">
    <property type="term" value="P:regulation of odontogenesis"/>
    <property type="evidence" value="ECO:0000250"/>
    <property type="project" value="UniProtKB"/>
</dbReference>
<dbReference type="GO" id="GO:0060021">
    <property type="term" value="P:roof of mouth development"/>
    <property type="evidence" value="ECO:0000250"/>
    <property type="project" value="UniProtKB"/>
</dbReference>
<dbReference type="CDD" id="cd00086">
    <property type="entry name" value="homeodomain"/>
    <property type="match status" value="1"/>
</dbReference>
<dbReference type="FunFam" id="1.10.10.60:FF:000134">
    <property type="entry name" value="Homeobox protein MSX-1"/>
    <property type="match status" value="1"/>
</dbReference>
<dbReference type="Gene3D" id="1.10.10.60">
    <property type="entry name" value="Homeodomain-like"/>
    <property type="match status" value="1"/>
</dbReference>
<dbReference type="InterPro" id="IPR001356">
    <property type="entry name" value="HD"/>
</dbReference>
<dbReference type="InterPro" id="IPR020479">
    <property type="entry name" value="HD_metazoa"/>
</dbReference>
<dbReference type="InterPro" id="IPR017970">
    <property type="entry name" value="Homeobox_CS"/>
</dbReference>
<dbReference type="InterPro" id="IPR009057">
    <property type="entry name" value="Homeodomain-like_sf"/>
</dbReference>
<dbReference type="InterPro" id="IPR050674">
    <property type="entry name" value="Msh_Homeobox_Regulators"/>
</dbReference>
<dbReference type="PANTHER" id="PTHR24338">
    <property type="entry name" value="HOMEOBOX PROTEIN MSX"/>
    <property type="match status" value="1"/>
</dbReference>
<dbReference type="PANTHER" id="PTHR24338:SF8">
    <property type="entry name" value="HOMEOBOX PROTEIN MSX-1"/>
    <property type="match status" value="1"/>
</dbReference>
<dbReference type="Pfam" id="PF00046">
    <property type="entry name" value="Homeodomain"/>
    <property type="match status" value="1"/>
</dbReference>
<dbReference type="PRINTS" id="PR00024">
    <property type="entry name" value="HOMEOBOX"/>
</dbReference>
<dbReference type="SMART" id="SM00389">
    <property type="entry name" value="HOX"/>
    <property type="match status" value="1"/>
</dbReference>
<dbReference type="SUPFAM" id="SSF46689">
    <property type="entry name" value="Homeodomain-like"/>
    <property type="match status" value="1"/>
</dbReference>
<dbReference type="PROSITE" id="PS00027">
    <property type="entry name" value="HOMEOBOX_1"/>
    <property type="match status" value="1"/>
</dbReference>
<dbReference type="PROSITE" id="PS50071">
    <property type="entry name" value="HOMEOBOX_2"/>
    <property type="match status" value="1"/>
</dbReference>